<gene>
    <name type="primary">cssA</name>
</gene>
<keyword id="KW-0002">3D-structure</keyword>
<keyword id="KW-0281">Fimbrium</keyword>
<keyword id="KW-0732">Signal</keyword>
<proteinExistence type="evidence at protein level"/>
<organism>
    <name type="scientific">Escherichia coli</name>
    <dbReference type="NCBI Taxonomy" id="562"/>
    <lineage>
        <taxon>Bacteria</taxon>
        <taxon>Pseudomonadati</taxon>
        <taxon>Pseudomonadota</taxon>
        <taxon>Gammaproteobacteria</taxon>
        <taxon>Enterobacterales</taxon>
        <taxon>Enterobacteriaceae</taxon>
        <taxon>Escherichia</taxon>
    </lineage>
</organism>
<dbReference type="EMBL" id="U04844">
    <property type="protein sequence ID" value="AAC45093.1"/>
    <property type="molecule type" value="Unassigned_DNA"/>
</dbReference>
<dbReference type="PIR" id="I60266">
    <property type="entry name" value="I60266"/>
</dbReference>
<dbReference type="RefSeq" id="WP_000750952.1">
    <property type="nucleotide sequence ID" value="NZ_UGCI01000001.1"/>
</dbReference>
<dbReference type="RefSeq" id="YP_008531445.1">
    <property type="nucleotide sequence ID" value="NC_022333.1"/>
</dbReference>
<dbReference type="PDB" id="4B9G">
    <property type="method" value="X-ray"/>
    <property type="resolution" value="1.04 A"/>
    <property type="chains" value="A/B=19-34"/>
</dbReference>
<dbReference type="PDB" id="4B9I">
    <property type="method" value="X-ray"/>
    <property type="resolution" value="1.50 A"/>
    <property type="chains" value="A=28-154"/>
</dbReference>
<dbReference type="PDB" id="4B9J">
    <property type="method" value="X-ray"/>
    <property type="resolution" value="2.54 A"/>
    <property type="chains" value="A=28-154"/>
</dbReference>
<dbReference type="PDBsum" id="4B9G"/>
<dbReference type="PDBsum" id="4B9I"/>
<dbReference type="PDBsum" id="4B9J"/>
<dbReference type="SMR" id="P53508"/>
<dbReference type="EvolutionaryTrace" id="P53508"/>
<dbReference type="GO" id="GO:0009289">
    <property type="term" value="C:pilus"/>
    <property type="evidence" value="ECO:0007669"/>
    <property type="project" value="UniProtKB-SubCell"/>
</dbReference>
<dbReference type="Gene3D" id="2.60.40.3480">
    <property type="match status" value="2"/>
</dbReference>
<dbReference type="InterPro" id="IPR053732">
    <property type="entry name" value="Fimbrial_Assembly_Comp"/>
</dbReference>
<comment type="function">
    <text>Fimbriae (also called pili), polar filaments radiating from the surface of the bacterium to a length of 0.5-1.5 micrometers and numbering 100-300 per cell, enable bacteria to colonize the epithelium of specific host organs.</text>
</comment>
<comment type="subcellular location">
    <subcellularLocation>
        <location>Fimbrium</location>
    </subcellularLocation>
</comment>
<sequence length="154" mass="16953">MKKTIGLILILASFGSHARTEIATKNFPVSTTISKSFFAPEPQIQPSFGKNVGKEGGLLFSVSLTVPENVSQVTVYPVYDEDYGLGRLVNTADDSQSIIYQIVDDKGRKMLKDHGAEVTPNQQITFRALNYTSGDKEIPPGIYNDQVMVGYYVN</sequence>
<accession>P53508</accession>
<evidence type="ECO:0000255" key="1"/>
<evidence type="ECO:0007829" key="2">
    <source>
        <dbReference type="PDB" id="4B9I"/>
    </source>
</evidence>
<evidence type="ECO:0007829" key="3">
    <source>
        <dbReference type="PDB" id="4B9J"/>
    </source>
</evidence>
<reference key="1">
    <citation type="submission" date="1994-01" db="EMBL/GenBank/DDBJ databases">
        <authorList>
            <person name="Wolf M.K."/>
            <person name="de Haan L."/>
            <person name="Cassels F.C."/>
            <person name="Willshaw G.A."/>
            <person name="van Gestel E."/>
            <person name="Gaastra W."/>
            <person name="Warren R."/>
            <person name="Boedeker E.C."/>
        </authorList>
    </citation>
    <scope>NUCLEOTIDE SEQUENCE [GENOMIC DNA]</scope>
    <source>
        <strain>O167:H5 / E10703 / EIEC</strain>
    </source>
</reference>
<name>CSSA1_ECOLX</name>
<protein>
    <recommendedName>
        <fullName>CS6 fimbrial subunit A</fullName>
    </recommendedName>
    <alternativeName>
        <fullName>CS6 pilin</fullName>
    </alternativeName>
</protein>
<feature type="signal peptide" evidence="1">
    <location>
        <begin position="1"/>
        <end position="18"/>
    </location>
</feature>
<feature type="chain" id="PRO_0000009182" description="CS6 fimbrial subunit A">
    <location>
        <begin position="19"/>
        <end position="154"/>
    </location>
</feature>
<feature type="strand" evidence="3">
    <location>
        <begin position="22"/>
        <end position="33"/>
    </location>
</feature>
<feature type="strand" evidence="2">
    <location>
        <begin position="43"/>
        <end position="46"/>
    </location>
</feature>
<feature type="strand" evidence="2">
    <location>
        <begin position="58"/>
        <end position="65"/>
    </location>
</feature>
<feature type="strand" evidence="2">
    <location>
        <begin position="72"/>
        <end position="78"/>
    </location>
</feature>
<feature type="turn" evidence="2">
    <location>
        <begin position="81"/>
        <end position="84"/>
    </location>
</feature>
<feature type="strand" evidence="2">
    <location>
        <begin position="85"/>
        <end position="90"/>
    </location>
</feature>
<feature type="strand" evidence="2">
    <location>
        <begin position="93"/>
        <end position="103"/>
    </location>
</feature>
<feature type="strand" evidence="2">
    <location>
        <begin position="123"/>
        <end position="130"/>
    </location>
</feature>
<feature type="strand" evidence="2">
    <location>
        <begin position="140"/>
        <end position="152"/>
    </location>
</feature>